<reference key="1">
    <citation type="journal article" date="1985" name="J. Virol.">
        <title>Molecular cloning and nucleotide sequence of deer papillomavirus.</title>
        <authorList>
            <person name="Groff D.E."/>
            <person name="Lancaster W.D."/>
        </authorList>
    </citation>
    <scope>NUCLEOTIDE SEQUENCE [GENOMIC DNA]</scope>
</reference>
<name>VE4_OVPVD</name>
<organismHost>
    <name type="scientific">Odocoileus virginianus</name>
    <name type="common">White-tailed deer</name>
    <dbReference type="NCBI Taxonomy" id="9874"/>
</organismHost>
<evidence type="ECO:0000256" key="1">
    <source>
        <dbReference type="SAM" id="MobiDB-lite"/>
    </source>
</evidence>
<keyword id="KW-0244">Early protein</keyword>
<keyword id="KW-1185">Reference proteome</keyword>
<accession>P06925</accession>
<gene>
    <name type="primary">E4</name>
</gene>
<sequence length="122" mass="13365">GITIVLITHILRPPTLERPSKDCGTPGAVKEADPPTRPTAPCFTLLLEATPFTVPSELAKTGVGPLTARLPTAHHSPRGVAWAPIPPPRCRARYRRTPGAYLYPTVLDEGRRITRRRQINTT</sequence>
<protein>
    <recommendedName>
        <fullName>Probable protein E4</fullName>
    </recommendedName>
</protein>
<organism>
    <name type="scientific">Odocoileus virginianus papillomavirus 1</name>
    <name type="common">DPV</name>
    <name type="synonym">Deer papillomavirus</name>
    <dbReference type="NCBI Taxonomy" id="2772504"/>
    <lineage>
        <taxon>Viruses</taxon>
        <taxon>Monodnaviria</taxon>
        <taxon>Shotokuvirae</taxon>
        <taxon>Cossaviricota</taxon>
        <taxon>Papovaviricetes</taxon>
        <taxon>Zurhausenvirales</taxon>
        <taxon>Papillomaviridae</taxon>
        <taxon>Firstpapillomavirinae</taxon>
        <taxon>Deltapapillomavirus</taxon>
        <taxon>Deer papillomavirus</taxon>
    </lineage>
</organism>
<proteinExistence type="predicted"/>
<dbReference type="EMBL" id="M11910">
    <property type="protein sequence ID" value="AAA66845.1"/>
    <property type="molecule type" value="Genomic_DNA"/>
</dbReference>
<dbReference type="PIR" id="B22477">
    <property type="entry name" value="W4WLDP"/>
</dbReference>
<dbReference type="RefSeq" id="NP_041297.1">
    <property type="nucleotide sequence ID" value="NC_001523.1"/>
</dbReference>
<dbReference type="GeneID" id="1488983"/>
<dbReference type="KEGG" id="vg:1488983"/>
<dbReference type="Proteomes" id="UP000009185">
    <property type="component" value="Segment"/>
</dbReference>
<feature type="chain" id="PRO_0000133284" description="Probable protein E4">
    <location>
        <begin position="1"/>
        <end position="122"/>
    </location>
</feature>
<feature type="region of interest" description="Disordered" evidence="1">
    <location>
        <begin position="17"/>
        <end position="36"/>
    </location>
</feature>